<proteinExistence type="predicted"/>
<dbReference type="EMBL" id="L77117">
    <property type="protein sequence ID" value="AAB98178.1"/>
    <property type="molecule type" value="Genomic_DNA"/>
</dbReference>
<dbReference type="PIR" id="F64322">
    <property type="entry name" value="F64322"/>
</dbReference>
<dbReference type="RefSeq" id="WP_010869676.1">
    <property type="nucleotide sequence ID" value="NC_000909.1"/>
</dbReference>
<dbReference type="STRING" id="243232.MJ_0181"/>
<dbReference type="PaxDb" id="243232-MJ_0181"/>
<dbReference type="EnsemblBacteria" id="AAB98178">
    <property type="protein sequence ID" value="AAB98178"/>
    <property type="gene ID" value="MJ_0181"/>
</dbReference>
<dbReference type="GeneID" id="80265051"/>
<dbReference type="KEGG" id="mja:MJ_0181"/>
<dbReference type="eggNOG" id="arCOG12715">
    <property type="taxonomic scope" value="Archaea"/>
</dbReference>
<dbReference type="HOGENOM" id="CLU_1127094_0_0_2"/>
<dbReference type="InParanoid" id="Q57640"/>
<dbReference type="Proteomes" id="UP000000805">
    <property type="component" value="Chromosome"/>
</dbReference>
<feature type="chain" id="PRO_0000106730" description="Uncharacterized protein MJ0181">
    <location>
        <begin position="1"/>
        <end position="246"/>
    </location>
</feature>
<accession>Q57640</accession>
<sequence>MEKIFNISFSMPKSYELKDFIKQYDFFNDDKIAEKLERFFKAINFTNPRHLKKVLNKYAILIEFKNSKIDNERLIPEIIRIENGERKRKGYLFDTVFVLYFIILYEFYYGKYLEVKRYKCRLQTNTGLQSYFERYSLLSQIMKVIKNRNANDMDRVITNLMLLYSQLGYRYNYEIKGRKFYKLVINREIRDKDYNIANELSIELKEAGITVDFWEYIKNNYEDLIEENYPNPYPFTNLFKMVETYL</sequence>
<gene>
    <name type="ordered locus">MJ0181</name>
</gene>
<name>Y181_METJA</name>
<keyword id="KW-1185">Reference proteome</keyword>
<protein>
    <recommendedName>
        <fullName>Uncharacterized protein MJ0181</fullName>
    </recommendedName>
</protein>
<reference key="1">
    <citation type="journal article" date="1996" name="Science">
        <title>Complete genome sequence of the methanogenic archaeon, Methanococcus jannaschii.</title>
        <authorList>
            <person name="Bult C.J."/>
            <person name="White O."/>
            <person name="Olsen G.J."/>
            <person name="Zhou L."/>
            <person name="Fleischmann R.D."/>
            <person name="Sutton G.G."/>
            <person name="Blake J.A."/>
            <person name="FitzGerald L.M."/>
            <person name="Clayton R.A."/>
            <person name="Gocayne J.D."/>
            <person name="Kerlavage A.R."/>
            <person name="Dougherty B.A."/>
            <person name="Tomb J.-F."/>
            <person name="Adams M.D."/>
            <person name="Reich C.I."/>
            <person name="Overbeek R."/>
            <person name="Kirkness E.F."/>
            <person name="Weinstock K.G."/>
            <person name="Merrick J.M."/>
            <person name="Glodek A."/>
            <person name="Scott J.L."/>
            <person name="Geoghagen N.S.M."/>
            <person name="Weidman J.F."/>
            <person name="Fuhrmann J.L."/>
            <person name="Nguyen D."/>
            <person name="Utterback T.R."/>
            <person name="Kelley J.M."/>
            <person name="Peterson J.D."/>
            <person name="Sadow P.W."/>
            <person name="Hanna M.C."/>
            <person name="Cotton M.D."/>
            <person name="Roberts K.M."/>
            <person name="Hurst M.A."/>
            <person name="Kaine B.P."/>
            <person name="Borodovsky M."/>
            <person name="Klenk H.-P."/>
            <person name="Fraser C.M."/>
            <person name="Smith H.O."/>
            <person name="Woese C.R."/>
            <person name="Venter J.C."/>
        </authorList>
    </citation>
    <scope>NUCLEOTIDE SEQUENCE [LARGE SCALE GENOMIC DNA]</scope>
    <source>
        <strain>ATCC 43067 / DSM 2661 / JAL-1 / JCM 10045 / NBRC 100440</strain>
    </source>
</reference>
<organism>
    <name type="scientific">Methanocaldococcus jannaschii (strain ATCC 43067 / DSM 2661 / JAL-1 / JCM 10045 / NBRC 100440)</name>
    <name type="common">Methanococcus jannaschii</name>
    <dbReference type="NCBI Taxonomy" id="243232"/>
    <lineage>
        <taxon>Archaea</taxon>
        <taxon>Methanobacteriati</taxon>
        <taxon>Methanobacteriota</taxon>
        <taxon>Methanomada group</taxon>
        <taxon>Methanococci</taxon>
        <taxon>Methanococcales</taxon>
        <taxon>Methanocaldococcaceae</taxon>
        <taxon>Methanocaldococcus</taxon>
    </lineage>
</organism>